<dbReference type="EC" id="6.5.1.2" evidence="1"/>
<dbReference type="EMBL" id="BA000043">
    <property type="protein sequence ID" value="BAD74561.1"/>
    <property type="molecule type" value="Genomic_DNA"/>
</dbReference>
<dbReference type="RefSeq" id="WP_011229785.1">
    <property type="nucleotide sequence ID" value="NC_006510.1"/>
</dbReference>
<dbReference type="SMR" id="Q5L3B9"/>
<dbReference type="STRING" id="235909.GK0276"/>
<dbReference type="KEGG" id="gka:GK0276"/>
<dbReference type="PATRIC" id="fig|235909.7.peg.344"/>
<dbReference type="eggNOG" id="COG0272">
    <property type="taxonomic scope" value="Bacteria"/>
</dbReference>
<dbReference type="HOGENOM" id="CLU_007764_2_1_9"/>
<dbReference type="Proteomes" id="UP000001172">
    <property type="component" value="Chromosome"/>
</dbReference>
<dbReference type="GO" id="GO:0005829">
    <property type="term" value="C:cytosol"/>
    <property type="evidence" value="ECO:0007669"/>
    <property type="project" value="TreeGrafter"/>
</dbReference>
<dbReference type="GO" id="GO:0003677">
    <property type="term" value="F:DNA binding"/>
    <property type="evidence" value="ECO:0007669"/>
    <property type="project" value="InterPro"/>
</dbReference>
<dbReference type="GO" id="GO:0003911">
    <property type="term" value="F:DNA ligase (NAD+) activity"/>
    <property type="evidence" value="ECO:0007669"/>
    <property type="project" value="UniProtKB-UniRule"/>
</dbReference>
<dbReference type="GO" id="GO:0046872">
    <property type="term" value="F:metal ion binding"/>
    <property type="evidence" value="ECO:0007669"/>
    <property type="project" value="UniProtKB-KW"/>
</dbReference>
<dbReference type="GO" id="GO:0006281">
    <property type="term" value="P:DNA repair"/>
    <property type="evidence" value="ECO:0007669"/>
    <property type="project" value="UniProtKB-KW"/>
</dbReference>
<dbReference type="GO" id="GO:0006260">
    <property type="term" value="P:DNA replication"/>
    <property type="evidence" value="ECO:0007669"/>
    <property type="project" value="UniProtKB-KW"/>
</dbReference>
<dbReference type="CDD" id="cd17748">
    <property type="entry name" value="BRCT_DNA_ligase_like"/>
    <property type="match status" value="1"/>
</dbReference>
<dbReference type="CDD" id="cd00114">
    <property type="entry name" value="LIGANc"/>
    <property type="match status" value="1"/>
</dbReference>
<dbReference type="FunFam" id="1.10.150.20:FF:000006">
    <property type="entry name" value="DNA ligase"/>
    <property type="match status" value="1"/>
</dbReference>
<dbReference type="FunFam" id="1.10.150.20:FF:000007">
    <property type="entry name" value="DNA ligase"/>
    <property type="match status" value="1"/>
</dbReference>
<dbReference type="FunFam" id="1.10.287.610:FF:000002">
    <property type="entry name" value="DNA ligase"/>
    <property type="match status" value="1"/>
</dbReference>
<dbReference type="FunFam" id="2.40.50.140:FF:000012">
    <property type="entry name" value="DNA ligase"/>
    <property type="match status" value="1"/>
</dbReference>
<dbReference type="FunFam" id="3.30.470.30:FF:000001">
    <property type="entry name" value="DNA ligase"/>
    <property type="match status" value="1"/>
</dbReference>
<dbReference type="Gene3D" id="6.20.10.30">
    <property type="match status" value="1"/>
</dbReference>
<dbReference type="Gene3D" id="1.10.150.20">
    <property type="entry name" value="5' to 3' exonuclease, C-terminal subdomain"/>
    <property type="match status" value="2"/>
</dbReference>
<dbReference type="Gene3D" id="3.40.50.10190">
    <property type="entry name" value="BRCT domain"/>
    <property type="match status" value="1"/>
</dbReference>
<dbReference type="Gene3D" id="3.30.470.30">
    <property type="entry name" value="DNA ligase/mRNA capping enzyme"/>
    <property type="match status" value="1"/>
</dbReference>
<dbReference type="Gene3D" id="1.10.287.610">
    <property type="entry name" value="Helix hairpin bin"/>
    <property type="match status" value="1"/>
</dbReference>
<dbReference type="Gene3D" id="2.40.50.140">
    <property type="entry name" value="Nucleic acid-binding proteins"/>
    <property type="match status" value="1"/>
</dbReference>
<dbReference type="HAMAP" id="MF_01588">
    <property type="entry name" value="DNA_ligase_A"/>
    <property type="match status" value="1"/>
</dbReference>
<dbReference type="InterPro" id="IPR001357">
    <property type="entry name" value="BRCT_dom"/>
</dbReference>
<dbReference type="InterPro" id="IPR036420">
    <property type="entry name" value="BRCT_dom_sf"/>
</dbReference>
<dbReference type="InterPro" id="IPR041663">
    <property type="entry name" value="DisA/LigA_HHH"/>
</dbReference>
<dbReference type="InterPro" id="IPR001679">
    <property type="entry name" value="DNA_ligase"/>
</dbReference>
<dbReference type="InterPro" id="IPR018239">
    <property type="entry name" value="DNA_ligase_AS"/>
</dbReference>
<dbReference type="InterPro" id="IPR033136">
    <property type="entry name" value="DNA_ligase_CS"/>
</dbReference>
<dbReference type="InterPro" id="IPR013839">
    <property type="entry name" value="DNAligase_adenylation"/>
</dbReference>
<dbReference type="InterPro" id="IPR013840">
    <property type="entry name" value="DNAligase_N"/>
</dbReference>
<dbReference type="InterPro" id="IPR003583">
    <property type="entry name" value="Hlx-hairpin-Hlx_DNA-bd_motif"/>
</dbReference>
<dbReference type="InterPro" id="IPR012340">
    <property type="entry name" value="NA-bd_OB-fold"/>
</dbReference>
<dbReference type="InterPro" id="IPR004150">
    <property type="entry name" value="NAD_DNA_ligase_OB"/>
</dbReference>
<dbReference type="InterPro" id="IPR010994">
    <property type="entry name" value="RuvA_2-like"/>
</dbReference>
<dbReference type="InterPro" id="IPR004149">
    <property type="entry name" value="Znf_DNAligase_C4"/>
</dbReference>
<dbReference type="NCBIfam" id="TIGR00575">
    <property type="entry name" value="dnlj"/>
    <property type="match status" value="1"/>
</dbReference>
<dbReference type="NCBIfam" id="NF005932">
    <property type="entry name" value="PRK07956.1"/>
    <property type="match status" value="1"/>
</dbReference>
<dbReference type="PANTHER" id="PTHR23389">
    <property type="entry name" value="CHROMOSOME TRANSMISSION FIDELITY FACTOR 18"/>
    <property type="match status" value="1"/>
</dbReference>
<dbReference type="PANTHER" id="PTHR23389:SF9">
    <property type="entry name" value="DNA LIGASE"/>
    <property type="match status" value="1"/>
</dbReference>
<dbReference type="Pfam" id="PF00533">
    <property type="entry name" value="BRCT"/>
    <property type="match status" value="1"/>
</dbReference>
<dbReference type="Pfam" id="PF01653">
    <property type="entry name" value="DNA_ligase_aden"/>
    <property type="match status" value="1"/>
</dbReference>
<dbReference type="Pfam" id="PF03120">
    <property type="entry name" value="DNA_ligase_OB"/>
    <property type="match status" value="1"/>
</dbReference>
<dbReference type="Pfam" id="PF03119">
    <property type="entry name" value="DNA_ligase_ZBD"/>
    <property type="match status" value="1"/>
</dbReference>
<dbReference type="Pfam" id="PF12826">
    <property type="entry name" value="HHH_2"/>
    <property type="match status" value="1"/>
</dbReference>
<dbReference type="Pfam" id="PF14520">
    <property type="entry name" value="HHH_5"/>
    <property type="match status" value="1"/>
</dbReference>
<dbReference type="Pfam" id="PF22745">
    <property type="entry name" value="Nlig-Ia"/>
    <property type="match status" value="1"/>
</dbReference>
<dbReference type="PIRSF" id="PIRSF001604">
    <property type="entry name" value="LigA"/>
    <property type="match status" value="1"/>
</dbReference>
<dbReference type="SMART" id="SM00292">
    <property type="entry name" value="BRCT"/>
    <property type="match status" value="1"/>
</dbReference>
<dbReference type="SMART" id="SM00278">
    <property type="entry name" value="HhH1"/>
    <property type="match status" value="3"/>
</dbReference>
<dbReference type="SMART" id="SM00532">
    <property type="entry name" value="LIGANc"/>
    <property type="match status" value="1"/>
</dbReference>
<dbReference type="SUPFAM" id="SSF52113">
    <property type="entry name" value="BRCT domain"/>
    <property type="match status" value="1"/>
</dbReference>
<dbReference type="SUPFAM" id="SSF56091">
    <property type="entry name" value="DNA ligase/mRNA capping enzyme, catalytic domain"/>
    <property type="match status" value="1"/>
</dbReference>
<dbReference type="SUPFAM" id="SSF50249">
    <property type="entry name" value="Nucleic acid-binding proteins"/>
    <property type="match status" value="1"/>
</dbReference>
<dbReference type="SUPFAM" id="SSF47781">
    <property type="entry name" value="RuvA domain 2-like"/>
    <property type="match status" value="1"/>
</dbReference>
<dbReference type="PROSITE" id="PS50172">
    <property type="entry name" value="BRCT"/>
    <property type="match status" value="1"/>
</dbReference>
<dbReference type="PROSITE" id="PS01055">
    <property type="entry name" value="DNA_LIGASE_N1"/>
    <property type="match status" value="1"/>
</dbReference>
<dbReference type="PROSITE" id="PS01056">
    <property type="entry name" value="DNA_LIGASE_N2"/>
    <property type="match status" value="1"/>
</dbReference>
<feature type="chain" id="PRO_0000313247" description="DNA ligase">
    <location>
        <begin position="1"/>
        <end position="670"/>
    </location>
</feature>
<feature type="domain" description="BRCT" evidence="1">
    <location>
        <begin position="589"/>
        <end position="670"/>
    </location>
</feature>
<feature type="active site" description="N6-AMP-lysine intermediate" evidence="1">
    <location>
        <position position="114"/>
    </location>
</feature>
<feature type="binding site" evidence="1">
    <location>
        <begin position="34"/>
        <end position="38"/>
    </location>
    <ligand>
        <name>NAD(+)</name>
        <dbReference type="ChEBI" id="CHEBI:57540"/>
    </ligand>
</feature>
<feature type="binding site" evidence="1">
    <location>
        <begin position="83"/>
        <end position="84"/>
    </location>
    <ligand>
        <name>NAD(+)</name>
        <dbReference type="ChEBI" id="CHEBI:57540"/>
    </ligand>
</feature>
<feature type="binding site" evidence="1">
    <location>
        <position position="112"/>
    </location>
    <ligand>
        <name>NAD(+)</name>
        <dbReference type="ChEBI" id="CHEBI:57540"/>
    </ligand>
</feature>
<feature type="binding site" evidence="1">
    <location>
        <position position="135"/>
    </location>
    <ligand>
        <name>NAD(+)</name>
        <dbReference type="ChEBI" id="CHEBI:57540"/>
    </ligand>
</feature>
<feature type="binding site" evidence="1">
    <location>
        <position position="169"/>
    </location>
    <ligand>
        <name>NAD(+)</name>
        <dbReference type="ChEBI" id="CHEBI:57540"/>
    </ligand>
</feature>
<feature type="binding site" evidence="1">
    <location>
        <position position="285"/>
    </location>
    <ligand>
        <name>NAD(+)</name>
        <dbReference type="ChEBI" id="CHEBI:57540"/>
    </ligand>
</feature>
<feature type="binding site" evidence="1">
    <location>
        <position position="309"/>
    </location>
    <ligand>
        <name>NAD(+)</name>
        <dbReference type="ChEBI" id="CHEBI:57540"/>
    </ligand>
</feature>
<feature type="binding site" evidence="1">
    <location>
        <position position="403"/>
    </location>
    <ligand>
        <name>Zn(2+)</name>
        <dbReference type="ChEBI" id="CHEBI:29105"/>
    </ligand>
</feature>
<feature type="binding site" evidence="1">
    <location>
        <position position="406"/>
    </location>
    <ligand>
        <name>Zn(2+)</name>
        <dbReference type="ChEBI" id="CHEBI:29105"/>
    </ligand>
</feature>
<feature type="binding site" evidence="1">
    <location>
        <position position="421"/>
    </location>
    <ligand>
        <name>Zn(2+)</name>
        <dbReference type="ChEBI" id="CHEBI:29105"/>
    </ligand>
</feature>
<feature type="binding site" evidence="1">
    <location>
        <position position="426"/>
    </location>
    <ligand>
        <name>Zn(2+)</name>
        <dbReference type="ChEBI" id="CHEBI:29105"/>
    </ligand>
</feature>
<name>DNLJ_GEOKA</name>
<sequence length="670" mass="74643">MDRQQAERRAAELRELLHRYGYEYYVLDRPSVPDAEYDRLMQELMAIEEQYPELKTSDSPTQRIGGPPLEAFRKVTHVVPMMSLANAFDEGDLRDFDRRVRQEVGEAAYVCELKIDGLAVSVRYEDGYFVQGATRGDGTTGEDITENLRTIRSLPLRLKEPVSLEARGEAFMPKASFLRLNEERKARGEELFANPRNAAAGSLRQLDPKVAASRQLDLFVYGLANAEELGIESHSEALDYLQALGFKVNPERRRCANIDEVIAFVNEWHEKRPQLPYEIDGIVIKVDSFAQQRELGATAKSPRWAIAYKFPAEEVVTTLIGIEVNVGRTGVVTPTAILEPVRVAGTTVQRATLHNEDFIREKDIRIGDAVIIKKAGDIIPEVVGVVVDRRDGDETPFAMPTHCPECESELVRLEGEVALRCLNPNCPAQLRERLIHFASRAAMNIEGLGEKVVTQLFNAGLVRDVADLYRLTKEQLIGLERMGEKSATNLLAAIEASKQNSLERLLFGLGIRYVGAKAAQLLAEHFETMERLERATKEELMAVPEIGEKMADAITAFFAQPEATELLQELRAYGVNMAYKGPKRSAEAPADSAFAGKTVVLTGKLASMSRNEAKEEIERLGGRVTGSVSRSTDLVIAGEDAGSKLEKAQQLGIEIWDESRFLQEINRGKR</sequence>
<comment type="function">
    <text evidence="1">DNA ligase that catalyzes the formation of phosphodiester linkages between 5'-phosphoryl and 3'-hydroxyl groups in double-stranded DNA using NAD as a coenzyme and as the energy source for the reaction. It is essential for DNA replication and repair of damaged DNA.</text>
</comment>
<comment type="catalytic activity">
    <reaction evidence="1">
        <text>NAD(+) + (deoxyribonucleotide)n-3'-hydroxyl + 5'-phospho-(deoxyribonucleotide)m = (deoxyribonucleotide)n+m + AMP + beta-nicotinamide D-nucleotide.</text>
        <dbReference type="EC" id="6.5.1.2"/>
    </reaction>
</comment>
<comment type="cofactor">
    <cofactor evidence="1">
        <name>Mg(2+)</name>
        <dbReference type="ChEBI" id="CHEBI:18420"/>
    </cofactor>
    <cofactor evidence="1">
        <name>Mn(2+)</name>
        <dbReference type="ChEBI" id="CHEBI:29035"/>
    </cofactor>
</comment>
<comment type="similarity">
    <text evidence="1">Belongs to the NAD-dependent DNA ligase family. LigA subfamily.</text>
</comment>
<evidence type="ECO:0000255" key="1">
    <source>
        <dbReference type="HAMAP-Rule" id="MF_01588"/>
    </source>
</evidence>
<proteinExistence type="inferred from homology"/>
<accession>Q5L3B9</accession>
<reference key="1">
    <citation type="journal article" date="2004" name="Nucleic Acids Res.">
        <title>Thermoadaptation trait revealed by the genome sequence of thermophilic Geobacillus kaustophilus.</title>
        <authorList>
            <person name="Takami H."/>
            <person name="Takaki Y."/>
            <person name="Chee G.-J."/>
            <person name="Nishi S."/>
            <person name="Shimamura S."/>
            <person name="Suzuki H."/>
            <person name="Matsui S."/>
            <person name="Uchiyama I."/>
        </authorList>
    </citation>
    <scope>NUCLEOTIDE SEQUENCE [LARGE SCALE GENOMIC DNA]</scope>
    <source>
        <strain>HTA426</strain>
    </source>
</reference>
<protein>
    <recommendedName>
        <fullName evidence="1">DNA ligase</fullName>
        <ecNumber evidence="1">6.5.1.2</ecNumber>
    </recommendedName>
    <alternativeName>
        <fullName evidence="1">Polydeoxyribonucleotide synthase [NAD(+)]</fullName>
    </alternativeName>
</protein>
<keyword id="KW-0227">DNA damage</keyword>
<keyword id="KW-0234">DNA repair</keyword>
<keyword id="KW-0235">DNA replication</keyword>
<keyword id="KW-0436">Ligase</keyword>
<keyword id="KW-0460">Magnesium</keyword>
<keyword id="KW-0464">Manganese</keyword>
<keyword id="KW-0479">Metal-binding</keyword>
<keyword id="KW-0520">NAD</keyword>
<keyword id="KW-1185">Reference proteome</keyword>
<keyword id="KW-0862">Zinc</keyword>
<organism>
    <name type="scientific">Geobacillus kaustophilus (strain HTA426)</name>
    <dbReference type="NCBI Taxonomy" id="235909"/>
    <lineage>
        <taxon>Bacteria</taxon>
        <taxon>Bacillati</taxon>
        <taxon>Bacillota</taxon>
        <taxon>Bacilli</taxon>
        <taxon>Bacillales</taxon>
        <taxon>Anoxybacillaceae</taxon>
        <taxon>Geobacillus</taxon>
        <taxon>Geobacillus thermoleovorans group</taxon>
    </lineage>
</organism>
<gene>
    <name evidence="1" type="primary">ligA</name>
    <name type="ordered locus">GK0276</name>
</gene>